<sequence length="188" mass="21294">MSIKSDKWIRRMAEQHGMIEPFEPGQIRENDGRKIISYGTSSYGYDIRCAPEFKVFTNIHSTVVDPKHFDEKSFVDFHGDSCIIPPNSFALARTVEYFRIPRNVLTICLGKSTYARCGIIVNVTPFEPEWEGYVTLEFSNTTPLPARIYAGEGCAQVLFFESDEVCEVSYRDRGGKYQGQVGVTLPKA</sequence>
<dbReference type="EC" id="3.5.4.13" evidence="1"/>
<dbReference type="EMBL" id="CP000512">
    <property type="protein sequence ID" value="ABM31736.1"/>
    <property type="molecule type" value="Genomic_DNA"/>
</dbReference>
<dbReference type="RefSeq" id="WP_011794289.1">
    <property type="nucleotide sequence ID" value="NC_008752.1"/>
</dbReference>
<dbReference type="SMR" id="A1TL98"/>
<dbReference type="STRING" id="397945.Aave_1144"/>
<dbReference type="GeneID" id="79790800"/>
<dbReference type="KEGG" id="aav:Aave_1144"/>
<dbReference type="eggNOG" id="COG0717">
    <property type="taxonomic scope" value="Bacteria"/>
</dbReference>
<dbReference type="HOGENOM" id="CLU_087476_4_0_4"/>
<dbReference type="OrthoDB" id="9780956at2"/>
<dbReference type="UniPathway" id="UPA00610">
    <property type="reaction ID" value="UER00665"/>
</dbReference>
<dbReference type="Proteomes" id="UP000002596">
    <property type="component" value="Chromosome"/>
</dbReference>
<dbReference type="GO" id="GO:0008829">
    <property type="term" value="F:dCTP deaminase activity"/>
    <property type="evidence" value="ECO:0007669"/>
    <property type="project" value="UniProtKB-UniRule"/>
</dbReference>
<dbReference type="GO" id="GO:0000166">
    <property type="term" value="F:nucleotide binding"/>
    <property type="evidence" value="ECO:0007669"/>
    <property type="project" value="UniProtKB-KW"/>
</dbReference>
<dbReference type="GO" id="GO:0006226">
    <property type="term" value="P:dUMP biosynthetic process"/>
    <property type="evidence" value="ECO:0007669"/>
    <property type="project" value="UniProtKB-UniPathway"/>
</dbReference>
<dbReference type="GO" id="GO:0006229">
    <property type="term" value="P:dUTP biosynthetic process"/>
    <property type="evidence" value="ECO:0007669"/>
    <property type="project" value="UniProtKB-UniRule"/>
</dbReference>
<dbReference type="GO" id="GO:0015949">
    <property type="term" value="P:nucleobase-containing small molecule interconversion"/>
    <property type="evidence" value="ECO:0007669"/>
    <property type="project" value="TreeGrafter"/>
</dbReference>
<dbReference type="CDD" id="cd07557">
    <property type="entry name" value="trimeric_dUTPase"/>
    <property type="match status" value="1"/>
</dbReference>
<dbReference type="FunFam" id="2.70.40.10:FF:000001">
    <property type="entry name" value="dCTP deaminase"/>
    <property type="match status" value="1"/>
</dbReference>
<dbReference type="Gene3D" id="2.70.40.10">
    <property type="match status" value="1"/>
</dbReference>
<dbReference type="HAMAP" id="MF_00146">
    <property type="entry name" value="dCTP_deaminase"/>
    <property type="match status" value="1"/>
</dbReference>
<dbReference type="InterPro" id="IPR011962">
    <property type="entry name" value="dCTP_deaminase"/>
</dbReference>
<dbReference type="InterPro" id="IPR036157">
    <property type="entry name" value="dUTPase-like_sf"/>
</dbReference>
<dbReference type="InterPro" id="IPR033704">
    <property type="entry name" value="dUTPase_trimeric"/>
</dbReference>
<dbReference type="NCBIfam" id="TIGR02274">
    <property type="entry name" value="dCTP_deam"/>
    <property type="match status" value="1"/>
</dbReference>
<dbReference type="PANTHER" id="PTHR42680">
    <property type="entry name" value="DCTP DEAMINASE"/>
    <property type="match status" value="1"/>
</dbReference>
<dbReference type="PANTHER" id="PTHR42680:SF3">
    <property type="entry name" value="DCTP DEAMINASE"/>
    <property type="match status" value="1"/>
</dbReference>
<dbReference type="Pfam" id="PF22769">
    <property type="entry name" value="DCD"/>
    <property type="match status" value="1"/>
</dbReference>
<dbReference type="SUPFAM" id="SSF51283">
    <property type="entry name" value="dUTPase-like"/>
    <property type="match status" value="1"/>
</dbReference>
<name>DCD_PARC0</name>
<evidence type="ECO:0000255" key="1">
    <source>
        <dbReference type="HAMAP-Rule" id="MF_00146"/>
    </source>
</evidence>
<organism>
    <name type="scientific">Paracidovorax citrulli (strain AAC00-1)</name>
    <name type="common">Acidovorax citrulli</name>
    <dbReference type="NCBI Taxonomy" id="397945"/>
    <lineage>
        <taxon>Bacteria</taxon>
        <taxon>Pseudomonadati</taxon>
        <taxon>Pseudomonadota</taxon>
        <taxon>Betaproteobacteria</taxon>
        <taxon>Burkholderiales</taxon>
        <taxon>Comamonadaceae</taxon>
        <taxon>Paracidovorax</taxon>
    </lineage>
</organism>
<protein>
    <recommendedName>
        <fullName evidence="1">dCTP deaminase</fullName>
        <ecNumber evidence="1">3.5.4.13</ecNumber>
    </recommendedName>
    <alternativeName>
        <fullName evidence="1">Deoxycytidine triphosphate deaminase</fullName>
    </alternativeName>
</protein>
<gene>
    <name evidence="1" type="primary">dcd</name>
    <name type="ordered locus">Aave_1144</name>
</gene>
<feature type="chain" id="PRO_1000009666" description="dCTP deaminase">
    <location>
        <begin position="1"/>
        <end position="188"/>
    </location>
</feature>
<feature type="active site" description="Proton donor/acceptor" evidence="1">
    <location>
        <position position="137"/>
    </location>
</feature>
<feature type="binding site" evidence="1">
    <location>
        <begin position="111"/>
        <end position="116"/>
    </location>
    <ligand>
        <name>dCTP</name>
        <dbReference type="ChEBI" id="CHEBI:61481"/>
    </ligand>
</feature>
<feature type="binding site" evidence="1">
    <location>
        <begin position="135"/>
        <end position="137"/>
    </location>
    <ligand>
        <name>dCTP</name>
        <dbReference type="ChEBI" id="CHEBI:61481"/>
    </ligand>
</feature>
<feature type="binding site" evidence="1">
    <location>
        <position position="156"/>
    </location>
    <ligand>
        <name>dCTP</name>
        <dbReference type="ChEBI" id="CHEBI:61481"/>
    </ligand>
</feature>
<feature type="binding site" evidence="1">
    <location>
        <position position="170"/>
    </location>
    <ligand>
        <name>dCTP</name>
        <dbReference type="ChEBI" id="CHEBI:61481"/>
    </ligand>
</feature>
<feature type="binding site" evidence="1">
    <location>
        <position position="180"/>
    </location>
    <ligand>
        <name>dCTP</name>
        <dbReference type="ChEBI" id="CHEBI:61481"/>
    </ligand>
</feature>
<keyword id="KW-0378">Hydrolase</keyword>
<keyword id="KW-0546">Nucleotide metabolism</keyword>
<keyword id="KW-0547">Nucleotide-binding</keyword>
<accession>A1TL98</accession>
<comment type="function">
    <text evidence="1">Catalyzes the deamination of dCTP to dUTP.</text>
</comment>
<comment type="catalytic activity">
    <reaction evidence="1">
        <text>dCTP + H2O + H(+) = dUTP + NH4(+)</text>
        <dbReference type="Rhea" id="RHEA:22680"/>
        <dbReference type="ChEBI" id="CHEBI:15377"/>
        <dbReference type="ChEBI" id="CHEBI:15378"/>
        <dbReference type="ChEBI" id="CHEBI:28938"/>
        <dbReference type="ChEBI" id="CHEBI:61481"/>
        <dbReference type="ChEBI" id="CHEBI:61555"/>
        <dbReference type="EC" id="3.5.4.13"/>
    </reaction>
</comment>
<comment type="pathway">
    <text evidence="1">Pyrimidine metabolism; dUMP biosynthesis; dUMP from dCTP (dUTP route): step 1/2.</text>
</comment>
<comment type="subunit">
    <text evidence="1">Homotrimer.</text>
</comment>
<comment type="similarity">
    <text evidence="1">Belongs to the dCTP deaminase family.</text>
</comment>
<proteinExistence type="inferred from homology"/>
<reference key="1">
    <citation type="submission" date="2006-12" db="EMBL/GenBank/DDBJ databases">
        <title>Complete sequence of Acidovorax avenae subsp. citrulli AAC00-1.</title>
        <authorList>
            <person name="Copeland A."/>
            <person name="Lucas S."/>
            <person name="Lapidus A."/>
            <person name="Barry K."/>
            <person name="Detter J.C."/>
            <person name="Glavina del Rio T."/>
            <person name="Dalin E."/>
            <person name="Tice H."/>
            <person name="Pitluck S."/>
            <person name="Kiss H."/>
            <person name="Brettin T."/>
            <person name="Bruce D."/>
            <person name="Han C."/>
            <person name="Tapia R."/>
            <person name="Gilna P."/>
            <person name="Schmutz J."/>
            <person name="Larimer F."/>
            <person name="Land M."/>
            <person name="Hauser L."/>
            <person name="Kyrpides N."/>
            <person name="Kim E."/>
            <person name="Stahl D."/>
            <person name="Richardson P."/>
        </authorList>
    </citation>
    <scope>NUCLEOTIDE SEQUENCE [LARGE SCALE GENOMIC DNA]</scope>
    <source>
        <strain>AAC00-1</strain>
    </source>
</reference>